<keyword id="KW-0456">Lyase</keyword>
<proteinExistence type="inferred from homology"/>
<dbReference type="EC" id="4.2.3.3" evidence="1"/>
<dbReference type="EMBL" id="CP000572">
    <property type="protein sequence ID" value="ABN90516.1"/>
    <property type="molecule type" value="Genomic_DNA"/>
</dbReference>
<dbReference type="RefSeq" id="WP_004186317.1">
    <property type="nucleotide sequence ID" value="NC_009076.1"/>
</dbReference>
<dbReference type="SMR" id="A3NT52"/>
<dbReference type="KEGG" id="bpl:BURPS1106A_1244"/>
<dbReference type="HOGENOM" id="CLU_120420_1_0_4"/>
<dbReference type="Proteomes" id="UP000006738">
    <property type="component" value="Chromosome I"/>
</dbReference>
<dbReference type="GO" id="GO:0005829">
    <property type="term" value="C:cytosol"/>
    <property type="evidence" value="ECO:0007669"/>
    <property type="project" value="TreeGrafter"/>
</dbReference>
<dbReference type="GO" id="GO:0008929">
    <property type="term" value="F:methylglyoxal synthase activity"/>
    <property type="evidence" value="ECO:0007669"/>
    <property type="project" value="UniProtKB-UniRule"/>
</dbReference>
<dbReference type="GO" id="GO:0019242">
    <property type="term" value="P:methylglyoxal biosynthetic process"/>
    <property type="evidence" value="ECO:0007669"/>
    <property type="project" value="UniProtKB-UniRule"/>
</dbReference>
<dbReference type="CDD" id="cd01422">
    <property type="entry name" value="MGS"/>
    <property type="match status" value="1"/>
</dbReference>
<dbReference type="Gene3D" id="3.40.50.1380">
    <property type="entry name" value="Methylglyoxal synthase-like domain"/>
    <property type="match status" value="1"/>
</dbReference>
<dbReference type="HAMAP" id="MF_00549">
    <property type="entry name" value="Methylglyoxal_synth"/>
    <property type="match status" value="1"/>
</dbReference>
<dbReference type="InterPro" id="IPR004363">
    <property type="entry name" value="Methylgl_synth"/>
</dbReference>
<dbReference type="InterPro" id="IPR018148">
    <property type="entry name" value="Methylglyoxal_synth_AS"/>
</dbReference>
<dbReference type="InterPro" id="IPR011607">
    <property type="entry name" value="MGS-like_dom"/>
</dbReference>
<dbReference type="InterPro" id="IPR036914">
    <property type="entry name" value="MGS-like_dom_sf"/>
</dbReference>
<dbReference type="NCBIfam" id="TIGR00160">
    <property type="entry name" value="MGSA"/>
    <property type="match status" value="1"/>
</dbReference>
<dbReference type="NCBIfam" id="NF003559">
    <property type="entry name" value="PRK05234.1"/>
    <property type="match status" value="1"/>
</dbReference>
<dbReference type="PANTHER" id="PTHR30492">
    <property type="entry name" value="METHYLGLYOXAL SYNTHASE"/>
    <property type="match status" value="1"/>
</dbReference>
<dbReference type="PANTHER" id="PTHR30492:SF0">
    <property type="entry name" value="METHYLGLYOXAL SYNTHASE"/>
    <property type="match status" value="1"/>
</dbReference>
<dbReference type="Pfam" id="PF02142">
    <property type="entry name" value="MGS"/>
    <property type="match status" value="1"/>
</dbReference>
<dbReference type="PIRSF" id="PIRSF006614">
    <property type="entry name" value="Methylglyox_syn"/>
    <property type="match status" value="1"/>
</dbReference>
<dbReference type="SMART" id="SM00851">
    <property type="entry name" value="MGS"/>
    <property type="match status" value="1"/>
</dbReference>
<dbReference type="SUPFAM" id="SSF52335">
    <property type="entry name" value="Methylglyoxal synthase-like"/>
    <property type="match status" value="1"/>
</dbReference>
<dbReference type="PROSITE" id="PS01335">
    <property type="entry name" value="METHYLGLYOXAL_SYNTH"/>
    <property type="match status" value="1"/>
</dbReference>
<dbReference type="PROSITE" id="PS51855">
    <property type="entry name" value="MGS"/>
    <property type="match status" value="1"/>
</dbReference>
<comment type="function">
    <text evidence="1">Catalyzes the formation of methylglyoxal from dihydroxyacetone phosphate.</text>
</comment>
<comment type="catalytic activity">
    <reaction evidence="1">
        <text>dihydroxyacetone phosphate = methylglyoxal + phosphate</text>
        <dbReference type="Rhea" id="RHEA:17937"/>
        <dbReference type="ChEBI" id="CHEBI:17158"/>
        <dbReference type="ChEBI" id="CHEBI:43474"/>
        <dbReference type="ChEBI" id="CHEBI:57642"/>
        <dbReference type="EC" id="4.2.3.3"/>
    </reaction>
</comment>
<comment type="similarity">
    <text evidence="1">Belongs to the methylglyoxal synthase family.</text>
</comment>
<reference key="1">
    <citation type="journal article" date="2010" name="Genome Biol. Evol.">
        <title>Continuing evolution of Burkholderia mallei through genome reduction and large-scale rearrangements.</title>
        <authorList>
            <person name="Losada L."/>
            <person name="Ronning C.M."/>
            <person name="DeShazer D."/>
            <person name="Woods D."/>
            <person name="Fedorova N."/>
            <person name="Kim H.S."/>
            <person name="Shabalina S.A."/>
            <person name="Pearson T.R."/>
            <person name="Brinkac L."/>
            <person name="Tan P."/>
            <person name="Nandi T."/>
            <person name="Crabtree J."/>
            <person name="Badger J."/>
            <person name="Beckstrom-Sternberg S."/>
            <person name="Saqib M."/>
            <person name="Schutzer S.E."/>
            <person name="Keim P."/>
            <person name="Nierman W.C."/>
        </authorList>
    </citation>
    <scope>NUCLEOTIDE SEQUENCE [LARGE SCALE GENOMIC DNA]</scope>
    <source>
        <strain>1106a</strain>
    </source>
</reference>
<name>MGSA_BURP0</name>
<accession>A3NT52</accession>
<feature type="chain" id="PRO_1000017795" description="Methylglyoxal synthase">
    <location>
        <begin position="1"/>
        <end position="130"/>
    </location>
</feature>
<feature type="domain" description="MGS-like" evidence="1">
    <location>
        <begin position="1"/>
        <end position="130"/>
    </location>
</feature>
<feature type="active site" description="Proton donor/acceptor" evidence="1">
    <location>
        <position position="63"/>
    </location>
</feature>
<feature type="binding site" evidence="1">
    <location>
        <position position="11"/>
    </location>
    <ligand>
        <name>substrate</name>
    </ligand>
</feature>
<feature type="binding site" evidence="1">
    <location>
        <position position="15"/>
    </location>
    <ligand>
        <name>substrate</name>
    </ligand>
</feature>
<feature type="binding site" evidence="1">
    <location>
        <begin position="37"/>
        <end position="40"/>
    </location>
    <ligand>
        <name>substrate</name>
    </ligand>
</feature>
<feature type="binding site" evidence="1">
    <location>
        <begin position="57"/>
        <end position="58"/>
    </location>
    <ligand>
        <name>substrate</name>
    </ligand>
</feature>
<feature type="binding site" evidence="1">
    <location>
        <position position="90"/>
    </location>
    <ligand>
        <name>substrate</name>
    </ligand>
</feature>
<protein>
    <recommendedName>
        <fullName evidence="1">Methylglyoxal synthase</fullName>
        <shortName evidence="1">MGS</shortName>
        <ecNumber evidence="1">4.2.3.3</ecNumber>
    </recommendedName>
</protein>
<gene>
    <name evidence="1" type="primary">mgsA</name>
    <name type="ordered locus">BURPS1106A_1244</name>
</gene>
<organism>
    <name type="scientific">Burkholderia pseudomallei (strain 1106a)</name>
    <dbReference type="NCBI Taxonomy" id="357348"/>
    <lineage>
        <taxon>Bacteria</taxon>
        <taxon>Pseudomonadati</taxon>
        <taxon>Pseudomonadota</taxon>
        <taxon>Betaproteobacteria</taxon>
        <taxon>Burkholderiales</taxon>
        <taxon>Burkholderiaceae</taxon>
        <taxon>Burkholderia</taxon>
        <taxon>pseudomallei group</taxon>
    </lineage>
</organism>
<sequence>MSTPRIALIAHDAKKDDIVALAGAYRATLAQCRLVATGTTGGRIAQAHGLDVERKLSGPLGGDLQIGAELADGRVDIVIFLRDPMTAQPHDPDITALVRACDVHDVPVATNVATARVLLDDLARRLTANA</sequence>
<evidence type="ECO:0000255" key="1">
    <source>
        <dbReference type="HAMAP-Rule" id="MF_00549"/>
    </source>
</evidence>